<organism>
    <name type="scientific">Leptospira interrogans serogroup Icterohaemorrhagiae serovar copenhageni (strain Fiocruz L1-130)</name>
    <dbReference type="NCBI Taxonomy" id="267671"/>
    <lineage>
        <taxon>Bacteria</taxon>
        <taxon>Pseudomonadati</taxon>
        <taxon>Spirochaetota</taxon>
        <taxon>Spirochaetia</taxon>
        <taxon>Leptospirales</taxon>
        <taxon>Leptospiraceae</taxon>
        <taxon>Leptospira</taxon>
    </lineage>
</organism>
<dbReference type="EC" id="6.1.1.14" evidence="1"/>
<dbReference type="EMBL" id="AE016823">
    <property type="protein sequence ID" value="AAS70919.1"/>
    <property type="molecule type" value="Genomic_DNA"/>
</dbReference>
<dbReference type="RefSeq" id="WP_000412102.1">
    <property type="nucleotide sequence ID" value="NC_005823.1"/>
</dbReference>
<dbReference type="SMR" id="Q72PW7"/>
<dbReference type="KEGG" id="lic:LIC_12350"/>
<dbReference type="HOGENOM" id="CLU_015515_2_1_12"/>
<dbReference type="Proteomes" id="UP000007037">
    <property type="component" value="Chromosome I"/>
</dbReference>
<dbReference type="GO" id="GO:0005737">
    <property type="term" value="C:cytoplasm"/>
    <property type="evidence" value="ECO:0007669"/>
    <property type="project" value="UniProtKB-SubCell"/>
</dbReference>
<dbReference type="GO" id="GO:0005524">
    <property type="term" value="F:ATP binding"/>
    <property type="evidence" value="ECO:0007669"/>
    <property type="project" value="UniProtKB-UniRule"/>
</dbReference>
<dbReference type="GO" id="GO:0004820">
    <property type="term" value="F:glycine-tRNA ligase activity"/>
    <property type="evidence" value="ECO:0000250"/>
    <property type="project" value="UniProtKB"/>
</dbReference>
<dbReference type="GO" id="GO:0046983">
    <property type="term" value="F:protein dimerization activity"/>
    <property type="evidence" value="ECO:0000250"/>
    <property type="project" value="UniProtKB"/>
</dbReference>
<dbReference type="GO" id="GO:0006426">
    <property type="term" value="P:glycyl-tRNA aminoacylation"/>
    <property type="evidence" value="ECO:0007669"/>
    <property type="project" value="UniProtKB-UniRule"/>
</dbReference>
<dbReference type="CDD" id="cd00774">
    <property type="entry name" value="GlyRS-like_core"/>
    <property type="match status" value="1"/>
</dbReference>
<dbReference type="CDD" id="cd00858">
    <property type="entry name" value="GlyRS_anticodon"/>
    <property type="match status" value="1"/>
</dbReference>
<dbReference type="FunFam" id="3.40.50.800:FF:000002">
    <property type="entry name" value="Glycine--tRNA ligase"/>
    <property type="match status" value="1"/>
</dbReference>
<dbReference type="Gene3D" id="3.40.50.800">
    <property type="entry name" value="Anticodon-binding domain"/>
    <property type="match status" value="1"/>
</dbReference>
<dbReference type="Gene3D" id="3.30.930.10">
    <property type="entry name" value="Bira Bifunctional Protein, Domain 2"/>
    <property type="match status" value="1"/>
</dbReference>
<dbReference type="HAMAP" id="MF_00253_B">
    <property type="entry name" value="Gly_tRNA_synth_B"/>
    <property type="match status" value="1"/>
</dbReference>
<dbReference type="InterPro" id="IPR002314">
    <property type="entry name" value="aa-tRNA-synt_IIb"/>
</dbReference>
<dbReference type="InterPro" id="IPR006195">
    <property type="entry name" value="aa-tRNA-synth_II"/>
</dbReference>
<dbReference type="InterPro" id="IPR045864">
    <property type="entry name" value="aa-tRNA-synth_II/BPL/LPL"/>
</dbReference>
<dbReference type="InterPro" id="IPR004154">
    <property type="entry name" value="Anticodon-bd"/>
</dbReference>
<dbReference type="InterPro" id="IPR036621">
    <property type="entry name" value="Anticodon-bd_dom_sf"/>
</dbReference>
<dbReference type="InterPro" id="IPR027031">
    <property type="entry name" value="Gly-tRNA_synthase/POLG2"/>
</dbReference>
<dbReference type="InterPro" id="IPR022961">
    <property type="entry name" value="Gly_tRNA_ligase_bac"/>
</dbReference>
<dbReference type="InterPro" id="IPR033731">
    <property type="entry name" value="GlyRS-like_core"/>
</dbReference>
<dbReference type="InterPro" id="IPR002315">
    <property type="entry name" value="tRNA-synt_gly"/>
</dbReference>
<dbReference type="NCBIfam" id="TIGR00389">
    <property type="entry name" value="glyS_dimeric"/>
    <property type="match status" value="1"/>
</dbReference>
<dbReference type="NCBIfam" id="NF003211">
    <property type="entry name" value="PRK04173.1"/>
    <property type="match status" value="1"/>
</dbReference>
<dbReference type="PANTHER" id="PTHR10745:SF8">
    <property type="entry name" value="DNA POLYMERASE SUBUNIT GAMMA-2, MITOCHONDRIAL"/>
    <property type="match status" value="1"/>
</dbReference>
<dbReference type="PANTHER" id="PTHR10745">
    <property type="entry name" value="GLYCYL-TRNA SYNTHETASE/DNA POLYMERASE SUBUNIT GAMMA-2"/>
    <property type="match status" value="1"/>
</dbReference>
<dbReference type="Pfam" id="PF03129">
    <property type="entry name" value="HGTP_anticodon"/>
    <property type="match status" value="1"/>
</dbReference>
<dbReference type="Pfam" id="PF00587">
    <property type="entry name" value="tRNA-synt_2b"/>
    <property type="match status" value="1"/>
</dbReference>
<dbReference type="PRINTS" id="PR01043">
    <property type="entry name" value="TRNASYNTHGLY"/>
</dbReference>
<dbReference type="SUPFAM" id="SSF52954">
    <property type="entry name" value="Class II aaRS ABD-related"/>
    <property type="match status" value="1"/>
</dbReference>
<dbReference type="SUPFAM" id="SSF55681">
    <property type="entry name" value="Class II aaRS and biotin synthetases"/>
    <property type="match status" value="1"/>
</dbReference>
<dbReference type="PROSITE" id="PS50862">
    <property type="entry name" value="AA_TRNA_LIGASE_II"/>
    <property type="match status" value="1"/>
</dbReference>
<comment type="function">
    <text evidence="1">Catalyzes the attachment of glycine to tRNA(Gly).</text>
</comment>
<comment type="catalytic activity">
    <reaction evidence="1">
        <text>tRNA(Gly) + glycine + ATP = glycyl-tRNA(Gly) + AMP + diphosphate</text>
        <dbReference type="Rhea" id="RHEA:16013"/>
        <dbReference type="Rhea" id="RHEA-COMP:9664"/>
        <dbReference type="Rhea" id="RHEA-COMP:9683"/>
        <dbReference type="ChEBI" id="CHEBI:30616"/>
        <dbReference type="ChEBI" id="CHEBI:33019"/>
        <dbReference type="ChEBI" id="CHEBI:57305"/>
        <dbReference type="ChEBI" id="CHEBI:78442"/>
        <dbReference type="ChEBI" id="CHEBI:78522"/>
        <dbReference type="ChEBI" id="CHEBI:456215"/>
        <dbReference type="EC" id="6.1.1.14"/>
    </reaction>
</comment>
<comment type="subunit">
    <text evidence="1">Homodimer.</text>
</comment>
<comment type="subcellular location">
    <subcellularLocation>
        <location evidence="1">Cytoplasm</location>
    </subcellularLocation>
</comment>
<comment type="similarity">
    <text evidence="1">Belongs to the class-II aminoacyl-tRNA synthetase family.</text>
</comment>
<evidence type="ECO:0000255" key="1">
    <source>
        <dbReference type="HAMAP-Rule" id="MF_00253"/>
    </source>
</evidence>
<proteinExistence type="inferred from homology"/>
<feature type="chain" id="PRO_0000072959" description="Glycine--tRNA ligase">
    <location>
        <begin position="1"/>
        <end position="464"/>
    </location>
</feature>
<feature type="binding site" evidence="1">
    <location>
        <position position="104"/>
    </location>
    <ligand>
        <name>substrate</name>
    </ligand>
</feature>
<feature type="binding site" evidence="1">
    <location>
        <position position="175"/>
    </location>
    <ligand>
        <name>substrate</name>
    </ligand>
</feature>
<feature type="binding site" evidence="1">
    <location>
        <begin position="207"/>
        <end position="209"/>
    </location>
    <ligand>
        <name>ATP</name>
        <dbReference type="ChEBI" id="CHEBI:30616"/>
    </ligand>
</feature>
<feature type="binding site" evidence="1">
    <location>
        <begin position="217"/>
        <end position="222"/>
    </location>
    <ligand>
        <name>ATP</name>
        <dbReference type="ChEBI" id="CHEBI:30616"/>
    </ligand>
</feature>
<feature type="binding site" evidence="1">
    <location>
        <begin position="222"/>
        <end position="226"/>
    </location>
    <ligand>
        <name>substrate</name>
    </ligand>
</feature>
<feature type="binding site" evidence="1">
    <location>
        <begin position="292"/>
        <end position="293"/>
    </location>
    <ligand>
        <name>ATP</name>
        <dbReference type="ChEBI" id="CHEBI:30616"/>
    </ligand>
</feature>
<feature type="binding site" evidence="1">
    <location>
        <begin position="332"/>
        <end position="336"/>
    </location>
    <ligand>
        <name>substrate</name>
    </ligand>
</feature>
<feature type="binding site" evidence="1">
    <location>
        <begin position="336"/>
        <end position="339"/>
    </location>
    <ligand>
        <name>ATP</name>
        <dbReference type="ChEBI" id="CHEBI:30616"/>
    </ligand>
</feature>
<keyword id="KW-0030">Aminoacyl-tRNA synthetase</keyword>
<keyword id="KW-0067">ATP-binding</keyword>
<keyword id="KW-0963">Cytoplasm</keyword>
<keyword id="KW-0436">Ligase</keyword>
<keyword id="KW-0547">Nucleotide-binding</keyword>
<keyword id="KW-0648">Protein biosynthesis</keyword>
<name>SYG_LEPIC</name>
<accession>Q72PW7</accession>
<reference key="1">
    <citation type="journal article" date="2004" name="J. Bacteriol.">
        <title>Comparative genomics of two Leptospira interrogans serovars reveals novel insights into physiology and pathogenesis.</title>
        <authorList>
            <person name="Nascimento A.L.T.O."/>
            <person name="Ko A.I."/>
            <person name="Martins E.A.L."/>
            <person name="Monteiro-Vitorello C.B."/>
            <person name="Ho P.L."/>
            <person name="Haake D.A."/>
            <person name="Verjovski-Almeida S."/>
            <person name="Hartskeerl R.A."/>
            <person name="Marques M.V."/>
            <person name="Oliveira M.C."/>
            <person name="Menck C.F.M."/>
            <person name="Leite L.C.C."/>
            <person name="Carrer H."/>
            <person name="Coutinho L.L."/>
            <person name="Degrave W.M."/>
            <person name="Dellagostin O.A."/>
            <person name="El-Dorry H."/>
            <person name="Ferro E.S."/>
            <person name="Ferro M.I.T."/>
            <person name="Furlan L.R."/>
            <person name="Gamberini M."/>
            <person name="Giglioti E.A."/>
            <person name="Goes-Neto A."/>
            <person name="Goldman G.H."/>
            <person name="Goldman M.H.S."/>
            <person name="Harakava R."/>
            <person name="Jeronimo S.M.B."/>
            <person name="Junqueira-de-Azevedo I.L.M."/>
            <person name="Kimura E.T."/>
            <person name="Kuramae E.E."/>
            <person name="Lemos E.G.M."/>
            <person name="Lemos M.V.F."/>
            <person name="Marino C.L."/>
            <person name="Nunes L.R."/>
            <person name="de Oliveira R.C."/>
            <person name="Pereira G.G."/>
            <person name="Reis M.S."/>
            <person name="Schriefer A."/>
            <person name="Siqueira W.J."/>
            <person name="Sommer P."/>
            <person name="Tsai S.M."/>
            <person name="Simpson A.J.G."/>
            <person name="Ferro J.A."/>
            <person name="Camargo L.E.A."/>
            <person name="Kitajima J.P."/>
            <person name="Setubal J.C."/>
            <person name="Van Sluys M.A."/>
        </authorList>
    </citation>
    <scope>NUCLEOTIDE SEQUENCE [LARGE SCALE GENOMIC DNA]</scope>
    <source>
        <strain>Fiocruz L1-130</strain>
    </source>
</reference>
<sequence length="464" mass="53771">MEKKESLDSSLKEIVSVCKRRGFVYPGSEIYGGLSNTFDYGPYGVELLQNLKQLWWKYFVHLREDIVGLDSSILLNPKVWEASGHVSNFNDPLIDCKNCKTRIRADKFLEDQKGEGFATGLTLEKMNQVIKESNFACPNCGQRGTFTEARDFNLMFKTSHGASAEDSLDIYLRPETAQGIFLNFKNVVSTTRRKIPFGIAQIGKSFRNEIMARQFVFRTREFEQMEMEFFCEPGTQKEWFSHWVNYCMNWLTEQVGIKKENLRVREHEKEELSFYSEGTSDIEFKYNFGWGELWGIASRTDYDLNQHQKFSGEDLKYQDQVQNKKYVPFVVEPALGVNRLFLAVVTDAYEEEKLPDGETRTVLRFSPKIAPVKAAVFPLMKKDGLPEKSREIFADLSKLGNIEYDDGGAIGKRYRRQDEIGTPFCITVDYDTLKDNTVTVRERDSMSQERIAVNQLKNWLFERL</sequence>
<protein>
    <recommendedName>
        <fullName evidence="1">Glycine--tRNA ligase</fullName>
        <ecNumber evidence="1">6.1.1.14</ecNumber>
    </recommendedName>
    <alternativeName>
        <fullName evidence="1">Glycyl-tRNA synthetase</fullName>
        <shortName evidence="1">GlyRS</shortName>
    </alternativeName>
</protein>
<gene>
    <name evidence="1" type="primary">glyQS</name>
    <name type="synonym">glyS</name>
    <name type="ordered locus">LIC_12350</name>
</gene>